<dbReference type="EC" id="3.4.24.-"/>
<dbReference type="EMBL" id="Z29947">
    <property type="protein sequence ID" value="CAA82844.1"/>
    <property type="molecule type" value="mRNA"/>
</dbReference>
<dbReference type="PIR" id="S42826">
    <property type="entry name" value="S42826"/>
</dbReference>
<dbReference type="SMR" id="P46508"/>
<dbReference type="FunCoup" id="P46508">
    <property type="interactions" value="2706"/>
</dbReference>
<dbReference type="STRING" id="6183.P46508"/>
<dbReference type="MEROPS" id="M41.A11"/>
<dbReference type="eggNOG" id="KOG0734">
    <property type="taxonomic scope" value="Eukaryota"/>
</dbReference>
<dbReference type="InParanoid" id="P46508"/>
<dbReference type="Proteomes" id="UP000008854">
    <property type="component" value="Unassembled WGS sequence"/>
</dbReference>
<dbReference type="GO" id="GO:0005743">
    <property type="term" value="C:mitochondrial inner membrane"/>
    <property type="evidence" value="ECO:0007669"/>
    <property type="project" value="TreeGrafter"/>
</dbReference>
<dbReference type="GO" id="GO:0005524">
    <property type="term" value="F:ATP binding"/>
    <property type="evidence" value="ECO:0007669"/>
    <property type="project" value="UniProtKB-KW"/>
</dbReference>
<dbReference type="GO" id="GO:0016887">
    <property type="term" value="F:ATP hydrolysis activity"/>
    <property type="evidence" value="ECO:0007669"/>
    <property type="project" value="InterPro"/>
</dbReference>
<dbReference type="GO" id="GO:0004176">
    <property type="term" value="F:ATP-dependent peptidase activity"/>
    <property type="evidence" value="ECO:0007669"/>
    <property type="project" value="InterPro"/>
</dbReference>
<dbReference type="GO" id="GO:0046872">
    <property type="term" value="F:metal ion binding"/>
    <property type="evidence" value="ECO:0007669"/>
    <property type="project" value="UniProtKB-KW"/>
</dbReference>
<dbReference type="GO" id="GO:0004222">
    <property type="term" value="F:metalloendopeptidase activity"/>
    <property type="evidence" value="ECO:0007669"/>
    <property type="project" value="InterPro"/>
</dbReference>
<dbReference type="GO" id="GO:0007005">
    <property type="term" value="P:mitochondrion organization"/>
    <property type="evidence" value="ECO:0007669"/>
    <property type="project" value="TreeGrafter"/>
</dbReference>
<dbReference type="GO" id="GO:0006515">
    <property type="term" value="P:protein quality control for misfolded or incompletely synthesized proteins"/>
    <property type="evidence" value="ECO:0007669"/>
    <property type="project" value="TreeGrafter"/>
</dbReference>
<dbReference type="CDD" id="cd19501">
    <property type="entry name" value="RecA-like_FtsH"/>
    <property type="match status" value="1"/>
</dbReference>
<dbReference type="FunFam" id="1.10.8.60:FF:000001">
    <property type="entry name" value="ATP-dependent zinc metalloprotease FtsH"/>
    <property type="match status" value="1"/>
</dbReference>
<dbReference type="FunFam" id="1.20.58.760:FF:000001">
    <property type="entry name" value="ATP-dependent zinc metalloprotease FtsH"/>
    <property type="match status" value="1"/>
</dbReference>
<dbReference type="FunFam" id="3.40.50.300:FF:000352">
    <property type="entry name" value="ATP-dependent zinc metalloprotease FTSH 7, chloroplastic"/>
    <property type="match status" value="1"/>
</dbReference>
<dbReference type="Gene3D" id="1.10.8.60">
    <property type="match status" value="1"/>
</dbReference>
<dbReference type="Gene3D" id="3.40.50.300">
    <property type="entry name" value="P-loop containing nucleotide triphosphate hydrolases"/>
    <property type="match status" value="1"/>
</dbReference>
<dbReference type="Gene3D" id="1.20.58.760">
    <property type="entry name" value="Peptidase M41"/>
    <property type="match status" value="1"/>
</dbReference>
<dbReference type="InterPro" id="IPR003593">
    <property type="entry name" value="AAA+_ATPase"/>
</dbReference>
<dbReference type="InterPro" id="IPR041569">
    <property type="entry name" value="AAA_lid_3"/>
</dbReference>
<dbReference type="InterPro" id="IPR003959">
    <property type="entry name" value="ATPase_AAA_core"/>
</dbReference>
<dbReference type="InterPro" id="IPR003960">
    <property type="entry name" value="ATPase_AAA_CS"/>
</dbReference>
<dbReference type="InterPro" id="IPR027417">
    <property type="entry name" value="P-loop_NTPase"/>
</dbReference>
<dbReference type="InterPro" id="IPR000642">
    <property type="entry name" value="Peptidase_M41"/>
</dbReference>
<dbReference type="InterPro" id="IPR037219">
    <property type="entry name" value="Peptidase_M41-like"/>
</dbReference>
<dbReference type="PANTHER" id="PTHR23076:SF97">
    <property type="entry name" value="ATP-DEPENDENT ZINC METALLOPROTEASE YME1L1"/>
    <property type="match status" value="1"/>
</dbReference>
<dbReference type="PANTHER" id="PTHR23076">
    <property type="entry name" value="METALLOPROTEASE M41 FTSH"/>
    <property type="match status" value="1"/>
</dbReference>
<dbReference type="Pfam" id="PF00004">
    <property type="entry name" value="AAA"/>
    <property type="match status" value="1"/>
</dbReference>
<dbReference type="Pfam" id="PF17862">
    <property type="entry name" value="AAA_lid_3"/>
    <property type="match status" value="1"/>
</dbReference>
<dbReference type="Pfam" id="PF01434">
    <property type="entry name" value="Peptidase_M41"/>
    <property type="match status" value="1"/>
</dbReference>
<dbReference type="PRINTS" id="PR00830">
    <property type="entry name" value="ENDOLAPTASE"/>
</dbReference>
<dbReference type="SMART" id="SM00382">
    <property type="entry name" value="AAA"/>
    <property type="match status" value="1"/>
</dbReference>
<dbReference type="SUPFAM" id="SSF140990">
    <property type="entry name" value="FtsH protease domain-like"/>
    <property type="match status" value="1"/>
</dbReference>
<dbReference type="SUPFAM" id="SSF52540">
    <property type="entry name" value="P-loop containing nucleoside triphosphate hydrolases"/>
    <property type="match status" value="1"/>
</dbReference>
<dbReference type="PROSITE" id="PS00674">
    <property type="entry name" value="AAA"/>
    <property type="match status" value="1"/>
</dbReference>
<protein>
    <recommendedName>
        <fullName>ATP-dependent zinc metalloprotease YME1 homolog</fullName>
        <ecNumber>3.4.24.-</ecNumber>
    </recommendedName>
</protein>
<evidence type="ECO:0000250" key="1"/>
<evidence type="ECO:0000255" key="2"/>
<evidence type="ECO:0000305" key="3"/>
<proteinExistence type="evidence at transcript level"/>
<keyword id="KW-0067">ATP-binding</keyword>
<keyword id="KW-0378">Hydrolase</keyword>
<keyword id="KW-0479">Metal-binding</keyword>
<keyword id="KW-0482">Metalloprotease</keyword>
<keyword id="KW-0547">Nucleotide-binding</keyword>
<keyword id="KW-0645">Protease</keyword>
<keyword id="KW-1185">Reference proteome</keyword>
<keyword id="KW-0862">Zinc</keyword>
<sequence>MIVSPCCRIIRTCCVSNRGTFHSRLAALYPSYIKIPNNHARIFVTKSRKINRPSSSFIIDTKEARQRNSDSSTVSSDLDEILKDQTPSAQLRLVDAYRRGFQSSTDSGKSSNKMQMWRTIIIKTILFGVVSCFTIVFLKKTLVGTFPKFLDQNIGSFAENTDVSFSDVQGCDEVKKELVDVVEFLRNPEKFNQIGAKLPKGVLLVGPPGVGKTLLAKAVSGEAQVPFLYASGSSFDEVLVGLGASRIRQLFTTAKQNSPCLVFIDEIDSVGGNRTFSPHHPFANQTINQLLAEMDGFQSKEGIIVLGATNQAEVLDKALLRPGRFDVQIHVSPPTYEGRIALLNLYLKKVKTGSNIDIEKLAHGTVGYTGADIQNLVNQAAIAAALRNDPFVEMHHLWDARDRLIMGPAKRRPLDDQTNRVSAFHEAGHALVALLTADSIPLHKVTIIPRGEAGGLTSFLQEKDISFMTRAQLLAQLDVLMGGRVGEELVFGADKVTNGAADDFRKATILAQNMVKRFGFSSKIGPRVIPDTQDEQLGEATRDLIDKEVDQLLNDSLTRVRTLLSSQSKQHKLLAEALLHFETLTKDEVLAVLAGKMKPPKTQSVTSKSTTLLPQLGPSTSTEIPRMIVSLIIVHVVDFISFFCPFKDTLHTYTHTHKLLFS</sequence>
<reference key="1">
    <citation type="thesis" date="1994" institute="Heinrich-Heine University / Duesseldorf" country="Germany">
        <authorList>
            <person name="Menrath M."/>
        </authorList>
    </citation>
    <scope>NUCLEOTIDE SEQUENCE [MRNA]</scope>
    <source>
        <strain>Liberian</strain>
    </source>
</reference>
<organism>
    <name type="scientific">Schistosoma mansoni</name>
    <name type="common">Blood fluke</name>
    <dbReference type="NCBI Taxonomy" id="6183"/>
    <lineage>
        <taxon>Eukaryota</taxon>
        <taxon>Metazoa</taxon>
        <taxon>Spiralia</taxon>
        <taxon>Lophotrochozoa</taxon>
        <taxon>Platyhelminthes</taxon>
        <taxon>Trematoda</taxon>
        <taxon>Digenea</taxon>
        <taxon>Strigeidida</taxon>
        <taxon>Schistosomatoidea</taxon>
        <taxon>Schistosomatidae</taxon>
        <taxon>Schistosoma</taxon>
    </lineage>
</organism>
<accession>P46508</accession>
<feature type="chain" id="PRO_0000084666" description="ATP-dependent zinc metalloprotease YME1 homolog">
    <location>
        <begin position="1"/>
        <end position="662"/>
    </location>
</feature>
<feature type="active site" evidence="1">
    <location>
        <position position="426"/>
    </location>
</feature>
<feature type="binding site" evidence="2">
    <location>
        <begin position="206"/>
        <end position="213"/>
    </location>
    <ligand>
        <name>ATP</name>
        <dbReference type="ChEBI" id="CHEBI:30616"/>
    </ligand>
</feature>
<feature type="binding site" evidence="1">
    <location>
        <position position="425"/>
    </location>
    <ligand>
        <name>Zn(2+)</name>
        <dbReference type="ChEBI" id="CHEBI:29105"/>
        <note>catalytic</note>
    </ligand>
</feature>
<feature type="binding site" evidence="1">
    <location>
        <position position="429"/>
    </location>
    <ligand>
        <name>Zn(2+)</name>
        <dbReference type="ChEBI" id="CHEBI:29105"/>
        <note>catalytic</note>
    </ligand>
</feature>
<feature type="binding site" evidence="1">
    <location>
        <position position="503"/>
    </location>
    <ligand>
        <name>Zn(2+)</name>
        <dbReference type="ChEBI" id="CHEBI:29105"/>
        <note>catalytic</note>
    </ligand>
</feature>
<name>YME1_SCHMA</name>
<comment type="function">
    <text>Putative ATP-dependent protease.</text>
</comment>
<comment type="cofactor">
    <cofactor evidence="3">
        <name>Zn(2+)</name>
        <dbReference type="ChEBI" id="CHEBI:29105"/>
    </cofactor>
    <text evidence="3">Binds 1 zinc ion per subunit.</text>
</comment>
<comment type="similarity">
    <text evidence="3">In the N-terminal section; belongs to the AAA ATPase family.</text>
</comment>
<comment type="similarity">
    <text evidence="3">In the C-terminal section; belongs to the peptidase M41 family.</text>
</comment>